<keyword id="KW-0143">Chaperone</keyword>
<keyword id="KW-0574">Periplasm</keyword>
<keyword id="KW-0653">Protein transport</keyword>
<keyword id="KW-0732">Signal</keyword>
<keyword id="KW-0813">Transport</keyword>
<reference key="1">
    <citation type="submission" date="2006-08" db="EMBL/GenBank/DDBJ databases">
        <title>Complete sequence of Shewanella sp. MR-4.</title>
        <authorList>
            <consortium name="US DOE Joint Genome Institute"/>
            <person name="Copeland A."/>
            <person name="Lucas S."/>
            <person name="Lapidus A."/>
            <person name="Barry K."/>
            <person name="Detter J.C."/>
            <person name="Glavina del Rio T."/>
            <person name="Hammon N."/>
            <person name="Israni S."/>
            <person name="Dalin E."/>
            <person name="Tice H."/>
            <person name="Pitluck S."/>
            <person name="Kiss H."/>
            <person name="Brettin T."/>
            <person name="Bruce D."/>
            <person name="Han C."/>
            <person name="Tapia R."/>
            <person name="Gilna P."/>
            <person name="Schmutz J."/>
            <person name="Larimer F."/>
            <person name="Land M."/>
            <person name="Hauser L."/>
            <person name="Kyrpides N."/>
            <person name="Mikhailova N."/>
            <person name="Nealson K."/>
            <person name="Konstantinidis K."/>
            <person name="Klappenbach J."/>
            <person name="Tiedje J."/>
            <person name="Richardson P."/>
        </authorList>
    </citation>
    <scope>NUCLEOTIDE SEQUENCE [LARGE SCALE GENOMIC DNA]</scope>
    <source>
        <strain>MR-4</strain>
    </source>
</reference>
<name>LOLA_SHESM</name>
<dbReference type="EMBL" id="CP000446">
    <property type="protein sequence ID" value="ABI39037.1"/>
    <property type="molecule type" value="Genomic_DNA"/>
</dbReference>
<dbReference type="RefSeq" id="WP_011622730.1">
    <property type="nucleotide sequence ID" value="NC_008321.1"/>
</dbReference>
<dbReference type="SMR" id="Q0HIT0"/>
<dbReference type="KEGG" id="she:Shewmr4_1964"/>
<dbReference type="HOGENOM" id="CLU_087560_1_1_6"/>
<dbReference type="GO" id="GO:0030288">
    <property type="term" value="C:outer membrane-bounded periplasmic space"/>
    <property type="evidence" value="ECO:0007669"/>
    <property type="project" value="TreeGrafter"/>
</dbReference>
<dbReference type="GO" id="GO:0044874">
    <property type="term" value="P:lipoprotein localization to outer membrane"/>
    <property type="evidence" value="ECO:0007669"/>
    <property type="project" value="UniProtKB-UniRule"/>
</dbReference>
<dbReference type="GO" id="GO:0042953">
    <property type="term" value="P:lipoprotein transport"/>
    <property type="evidence" value="ECO:0007669"/>
    <property type="project" value="InterPro"/>
</dbReference>
<dbReference type="CDD" id="cd16325">
    <property type="entry name" value="LolA"/>
    <property type="match status" value="1"/>
</dbReference>
<dbReference type="FunFam" id="2.50.20.10:FF:000016">
    <property type="entry name" value="Outer-membrane lipoprotein carrier protein"/>
    <property type="match status" value="1"/>
</dbReference>
<dbReference type="Gene3D" id="2.50.20.10">
    <property type="entry name" value="Lipoprotein localisation LolA/LolB/LppX"/>
    <property type="match status" value="1"/>
</dbReference>
<dbReference type="HAMAP" id="MF_00240">
    <property type="entry name" value="LolA"/>
    <property type="match status" value="1"/>
</dbReference>
<dbReference type="InterPro" id="IPR029046">
    <property type="entry name" value="LolA/LolB/LppX"/>
</dbReference>
<dbReference type="InterPro" id="IPR004564">
    <property type="entry name" value="OM_lipoprot_carrier_LolA-like"/>
</dbReference>
<dbReference type="InterPro" id="IPR018323">
    <property type="entry name" value="OM_lipoprot_carrier_LolA_Pbac"/>
</dbReference>
<dbReference type="NCBIfam" id="TIGR00547">
    <property type="entry name" value="lolA"/>
    <property type="match status" value="1"/>
</dbReference>
<dbReference type="PANTHER" id="PTHR35869">
    <property type="entry name" value="OUTER-MEMBRANE LIPOPROTEIN CARRIER PROTEIN"/>
    <property type="match status" value="1"/>
</dbReference>
<dbReference type="PANTHER" id="PTHR35869:SF1">
    <property type="entry name" value="OUTER-MEMBRANE LIPOPROTEIN CARRIER PROTEIN"/>
    <property type="match status" value="1"/>
</dbReference>
<dbReference type="Pfam" id="PF03548">
    <property type="entry name" value="LolA"/>
    <property type="match status" value="1"/>
</dbReference>
<dbReference type="SUPFAM" id="SSF89392">
    <property type="entry name" value="Prokaryotic lipoproteins and lipoprotein localization factors"/>
    <property type="match status" value="1"/>
</dbReference>
<protein>
    <recommendedName>
        <fullName evidence="1">Outer-membrane lipoprotein carrier protein</fullName>
    </recommendedName>
</protein>
<organism>
    <name type="scientific">Shewanella sp. (strain MR-4)</name>
    <dbReference type="NCBI Taxonomy" id="60480"/>
    <lineage>
        <taxon>Bacteria</taxon>
        <taxon>Pseudomonadati</taxon>
        <taxon>Pseudomonadota</taxon>
        <taxon>Gammaproteobacteria</taxon>
        <taxon>Alteromonadales</taxon>
        <taxon>Shewanellaceae</taxon>
        <taxon>Shewanella</taxon>
    </lineage>
</organism>
<feature type="signal peptide" evidence="1">
    <location>
        <begin position="1"/>
        <end position="21"/>
    </location>
</feature>
<feature type="chain" id="PRO_5000129834" description="Outer-membrane lipoprotein carrier protein">
    <location>
        <begin position="22"/>
        <end position="206"/>
    </location>
</feature>
<sequence length="206" mass="22953">MKKLLCAVLLSPLLYSNAVLADDAKQLRETLNGTESLKADFKQTVTDINKKVIQTGAGVFALAHPNQFYWHLTAPDESQIVADGKDLWIYNPFAEEVVIMDFAEAINASPIALLVHRDDATWSQYSVTKKQDCYEIKPKSTDAGITSVNVCFNKGTLNKFNVLDDKGNLSQFDLSNQHSINAADKALFKFVLPENVDVDDQRLKTQ</sequence>
<gene>
    <name evidence="1" type="primary">lolA</name>
    <name type="ordered locus">Shewmr4_1964</name>
</gene>
<comment type="function">
    <text evidence="1">Participates in the translocation of lipoproteins from the inner membrane to the outer membrane. Only forms a complex with a lipoprotein if the residue after the N-terminal Cys is not an aspartate (The Asp acts as a targeting signal to indicate that the lipoprotein should stay in the inner membrane).</text>
</comment>
<comment type="subunit">
    <text evidence="1">Monomer.</text>
</comment>
<comment type="subcellular location">
    <subcellularLocation>
        <location evidence="1">Periplasm</location>
    </subcellularLocation>
</comment>
<comment type="similarity">
    <text evidence="1">Belongs to the LolA family.</text>
</comment>
<proteinExistence type="inferred from homology"/>
<accession>Q0HIT0</accession>
<evidence type="ECO:0000255" key="1">
    <source>
        <dbReference type="HAMAP-Rule" id="MF_00240"/>
    </source>
</evidence>